<dbReference type="EMBL" id="Z94043">
    <property type="protein sequence ID" value="CAB08050.1"/>
    <property type="molecule type" value="Genomic_DNA"/>
</dbReference>
<dbReference type="EMBL" id="AL009126">
    <property type="protein sequence ID" value="CAB15452.1"/>
    <property type="molecule type" value="Genomic_DNA"/>
</dbReference>
<dbReference type="PIR" id="D70035">
    <property type="entry name" value="D70035"/>
</dbReference>
<dbReference type="RefSeq" id="WP_003228228.1">
    <property type="nucleotide sequence ID" value="NZ_OZ025638.1"/>
</dbReference>
<dbReference type="SMR" id="O07002"/>
<dbReference type="FunCoup" id="O07002">
    <property type="interactions" value="24"/>
</dbReference>
<dbReference type="STRING" id="224308.BSU34470"/>
<dbReference type="TCDB" id="2.A.3.11.1">
    <property type="family name" value="the amino acid-polyamine-organocation (apc) family"/>
</dbReference>
<dbReference type="PaxDb" id="224308-BSU34470"/>
<dbReference type="EnsemblBacteria" id="CAB15452">
    <property type="protein sequence ID" value="CAB15452"/>
    <property type="gene ID" value="BSU_34470"/>
</dbReference>
<dbReference type="GeneID" id="938612"/>
<dbReference type="KEGG" id="bsu:BSU34470"/>
<dbReference type="PATRIC" id="fig|224308.179.peg.3734"/>
<dbReference type="eggNOG" id="COG0531">
    <property type="taxonomic scope" value="Bacteria"/>
</dbReference>
<dbReference type="InParanoid" id="O07002"/>
<dbReference type="OrthoDB" id="9804700at2"/>
<dbReference type="PhylomeDB" id="O07002"/>
<dbReference type="BioCyc" id="BSUB:BSU34470-MONOMER"/>
<dbReference type="Proteomes" id="UP000001570">
    <property type="component" value="Chromosome"/>
</dbReference>
<dbReference type="GO" id="GO:0005886">
    <property type="term" value="C:plasma membrane"/>
    <property type="evidence" value="ECO:0007669"/>
    <property type="project" value="UniProtKB-SubCell"/>
</dbReference>
<dbReference type="GO" id="GO:0015293">
    <property type="term" value="F:symporter activity"/>
    <property type="evidence" value="ECO:0007669"/>
    <property type="project" value="UniProtKB-KW"/>
</dbReference>
<dbReference type="GO" id="GO:0006865">
    <property type="term" value="P:amino acid transport"/>
    <property type="evidence" value="ECO:0007669"/>
    <property type="project" value="UniProtKB-KW"/>
</dbReference>
<dbReference type="Gene3D" id="1.20.1740.10">
    <property type="entry name" value="Amino acid/polyamine transporter I"/>
    <property type="match status" value="1"/>
</dbReference>
<dbReference type="InterPro" id="IPR002293">
    <property type="entry name" value="AA/rel_permease1"/>
</dbReference>
<dbReference type="InterPro" id="IPR052962">
    <property type="entry name" value="AA_Transporter_AGT"/>
</dbReference>
<dbReference type="PANTHER" id="PTHR47547">
    <property type="match status" value="1"/>
</dbReference>
<dbReference type="PANTHER" id="PTHR47547:SF1">
    <property type="entry name" value="ASPARTATE-PROTON SYMPORTER"/>
    <property type="match status" value="1"/>
</dbReference>
<dbReference type="Pfam" id="PF13520">
    <property type="entry name" value="AA_permease_2"/>
    <property type="match status" value="1"/>
</dbReference>
<dbReference type="PIRSF" id="PIRSF006060">
    <property type="entry name" value="AA_transporter"/>
    <property type="match status" value="1"/>
</dbReference>
<gene>
    <name type="primary">yveA</name>
    <name type="ordered locus">BSU34470</name>
</gene>
<proteinExistence type="evidence at protein level"/>
<name>ASPP_BACSU</name>
<keyword id="KW-0029">Amino-acid transport</keyword>
<keyword id="KW-1003">Cell membrane</keyword>
<keyword id="KW-0472">Membrane</keyword>
<keyword id="KW-1185">Reference proteome</keyword>
<keyword id="KW-0769">Symport</keyword>
<keyword id="KW-0812">Transmembrane</keyword>
<keyword id="KW-1133">Transmembrane helix</keyword>
<keyword id="KW-0813">Transport</keyword>
<feature type="chain" id="PRO_0000054283" description="Aspartate-proton symporter">
    <location>
        <begin position="1"/>
        <end position="520"/>
    </location>
</feature>
<feature type="transmembrane region" description="Helical" evidence="1">
    <location>
        <begin position="13"/>
        <end position="33"/>
    </location>
</feature>
<feature type="transmembrane region" description="Helical" evidence="1">
    <location>
        <begin position="49"/>
        <end position="69"/>
    </location>
</feature>
<feature type="transmembrane region" description="Helical" evidence="1">
    <location>
        <begin position="85"/>
        <end position="105"/>
    </location>
</feature>
<feature type="transmembrane region" description="Helical" evidence="1">
    <location>
        <begin position="130"/>
        <end position="150"/>
    </location>
</feature>
<feature type="transmembrane region" description="Helical" evidence="1">
    <location>
        <begin position="161"/>
        <end position="181"/>
    </location>
</feature>
<feature type="transmembrane region" description="Helical" evidence="1">
    <location>
        <begin position="201"/>
        <end position="221"/>
    </location>
</feature>
<feature type="transmembrane region" description="Helical" evidence="1">
    <location>
        <begin position="232"/>
        <end position="252"/>
    </location>
</feature>
<feature type="transmembrane region" description="Helical" evidence="1">
    <location>
        <begin position="281"/>
        <end position="301"/>
    </location>
</feature>
<feature type="transmembrane region" description="Helical" evidence="1">
    <location>
        <begin position="345"/>
        <end position="365"/>
    </location>
</feature>
<feature type="transmembrane region" description="Helical" evidence="1">
    <location>
        <begin position="366"/>
        <end position="386"/>
    </location>
</feature>
<feature type="transmembrane region" description="Helical" evidence="1">
    <location>
        <begin position="402"/>
        <end position="422"/>
    </location>
</feature>
<feature type="transmembrane region" description="Helical" evidence="1">
    <location>
        <begin position="425"/>
        <end position="445"/>
    </location>
</feature>
<feature type="transmembrane region" description="Helical" evidence="1">
    <location>
        <begin position="460"/>
        <end position="480"/>
    </location>
</feature>
<feature type="transmembrane region" description="Helical" evidence="1">
    <location>
        <begin position="482"/>
        <end position="502"/>
    </location>
</feature>
<sequence>MSKQGNFQKSMSLFDLILIGMGAIFGSAWLFAVSNVASKAGPSGAFSWILGGAIILLIGLVYAELGAALPRTGGIIRYPVYSHGHLVGYLISFVTIVAYTSLISIEVTAVRQYVAYWFPGLTIKGSDSPTISGWILQFALLCLFFLLNYWSVKTFAKANFIISIFKYIVPITIIIVLIFHFQPENLSVQGFAPFGFTGIQAAISTGGVMFAYLGLHPIVSVAGEVQNPKRNIPIALIICIIVSTIIYTVLQVTFIGAIPTETLKHGWPAIGREFSLPFKDIAVMLGLGWLATLVILDAILSPGGNGNIFMNTTSRLVYAWARNGTLFGIFSKVNKDTGTPRASLWLSFALSIFWTLPFPSWNALVNVCSVALILSYAIAPISSAALRVNAKDLNRPFYLKGMSIIGPLSFIFTAFIVYWSGWKTVSWLLGSQLVMFLIYLCFSKYTPKEDVSLAQQLKSAWWLIGFYIMMLIFSYIGSFGHGLGIISNPVDLILVAIGSLAIYYWAKYTGLPKAAIDYDK</sequence>
<reference key="1">
    <citation type="submission" date="1997-04" db="EMBL/GenBank/DDBJ databases">
        <authorList>
            <person name="Denizot F."/>
        </authorList>
    </citation>
    <scope>NUCLEOTIDE SEQUENCE [GENOMIC DNA]</scope>
    <source>
        <strain>168</strain>
    </source>
</reference>
<reference key="2">
    <citation type="journal article" date="1997" name="Nature">
        <title>The complete genome sequence of the Gram-positive bacterium Bacillus subtilis.</title>
        <authorList>
            <person name="Kunst F."/>
            <person name="Ogasawara N."/>
            <person name="Moszer I."/>
            <person name="Albertini A.M."/>
            <person name="Alloni G."/>
            <person name="Azevedo V."/>
            <person name="Bertero M.G."/>
            <person name="Bessieres P."/>
            <person name="Bolotin A."/>
            <person name="Borchert S."/>
            <person name="Borriss R."/>
            <person name="Boursier L."/>
            <person name="Brans A."/>
            <person name="Braun M."/>
            <person name="Brignell S.C."/>
            <person name="Bron S."/>
            <person name="Brouillet S."/>
            <person name="Bruschi C.V."/>
            <person name="Caldwell B."/>
            <person name="Capuano V."/>
            <person name="Carter N.M."/>
            <person name="Choi S.-K."/>
            <person name="Codani J.-J."/>
            <person name="Connerton I.F."/>
            <person name="Cummings N.J."/>
            <person name="Daniel R.A."/>
            <person name="Denizot F."/>
            <person name="Devine K.M."/>
            <person name="Duesterhoeft A."/>
            <person name="Ehrlich S.D."/>
            <person name="Emmerson P.T."/>
            <person name="Entian K.-D."/>
            <person name="Errington J."/>
            <person name="Fabret C."/>
            <person name="Ferrari E."/>
            <person name="Foulger D."/>
            <person name="Fritz C."/>
            <person name="Fujita M."/>
            <person name="Fujita Y."/>
            <person name="Fuma S."/>
            <person name="Galizzi A."/>
            <person name="Galleron N."/>
            <person name="Ghim S.-Y."/>
            <person name="Glaser P."/>
            <person name="Goffeau A."/>
            <person name="Golightly E.J."/>
            <person name="Grandi G."/>
            <person name="Guiseppi G."/>
            <person name="Guy B.J."/>
            <person name="Haga K."/>
            <person name="Haiech J."/>
            <person name="Harwood C.R."/>
            <person name="Henaut A."/>
            <person name="Hilbert H."/>
            <person name="Holsappel S."/>
            <person name="Hosono S."/>
            <person name="Hullo M.-F."/>
            <person name="Itaya M."/>
            <person name="Jones L.-M."/>
            <person name="Joris B."/>
            <person name="Karamata D."/>
            <person name="Kasahara Y."/>
            <person name="Klaerr-Blanchard M."/>
            <person name="Klein C."/>
            <person name="Kobayashi Y."/>
            <person name="Koetter P."/>
            <person name="Koningstein G."/>
            <person name="Krogh S."/>
            <person name="Kumano M."/>
            <person name="Kurita K."/>
            <person name="Lapidus A."/>
            <person name="Lardinois S."/>
            <person name="Lauber J."/>
            <person name="Lazarevic V."/>
            <person name="Lee S.-M."/>
            <person name="Levine A."/>
            <person name="Liu H."/>
            <person name="Masuda S."/>
            <person name="Mauel C."/>
            <person name="Medigue C."/>
            <person name="Medina N."/>
            <person name="Mellado R.P."/>
            <person name="Mizuno M."/>
            <person name="Moestl D."/>
            <person name="Nakai S."/>
            <person name="Noback M."/>
            <person name="Noone D."/>
            <person name="O'Reilly M."/>
            <person name="Ogawa K."/>
            <person name="Ogiwara A."/>
            <person name="Oudega B."/>
            <person name="Park S.-H."/>
            <person name="Parro V."/>
            <person name="Pohl T.M."/>
            <person name="Portetelle D."/>
            <person name="Porwollik S."/>
            <person name="Prescott A.M."/>
            <person name="Presecan E."/>
            <person name="Pujic P."/>
            <person name="Purnelle B."/>
            <person name="Rapoport G."/>
            <person name="Rey M."/>
            <person name="Reynolds S."/>
            <person name="Rieger M."/>
            <person name="Rivolta C."/>
            <person name="Rocha E."/>
            <person name="Roche B."/>
            <person name="Rose M."/>
            <person name="Sadaie Y."/>
            <person name="Sato T."/>
            <person name="Scanlan E."/>
            <person name="Schleich S."/>
            <person name="Schroeter R."/>
            <person name="Scoffone F."/>
            <person name="Sekiguchi J."/>
            <person name="Sekowska A."/>
            <person name="Seror S.J."/>
            <person name="Serror P."/>
            <person name="Shin B.-S."/>
            <person name="Soldo B."/>
            <person name="Sorokin A."/>
            <person name="Tacconi E."/>
            <person name="Takagi T."/>
            <person name="Takahashi H."/>
            <person name="Takemaru K."/>
            <person name="Takeuchi M."/>
            <person name="Tamakoshi A."/>
            <person name="Tanaka T."/>
            <person name="Terpstra P."/>
            <person name="Tognoni A."/>
            <person name="Tosato V."/>
            <person name="Uchiyama S."/>
            <person name="Vandenbol M."/>
            <person name="Vannier F."/>
            <person name="Vassarotti A."/>
            <person name="Viari A."/>
            <person name="Wambutt R."/>
            <person name="Wedler E."/>
            <person name="Wedler H."/>
            <person name="Weitzenegger T."/>
            <person name="Winters P."/>
            <person name="Wipat A."/>
            <person name="Yamamoto H."/>
            <person name="Yamane K."/>
            <person name="Yasumoto K."/>
            <person name="Yata K."/>
            <person name="Yoshida K."/>
            <person name="Yoshikawa H.-F."/>
            <person name="Zumstein E."/>
            <person name="Yoshikawa H."/>
            <person name="Danchin A."/>
        </authorList>
    </citation>
    <scope>NUCLEOTIDE SEQUENCE [LARGE SCALE GENOMIC DNA]</scope>
    <source>
        <strain>168</strain>
    </source>
</reference>
<reference key="3">
    <citation type="journal article" date="2001" name="Microbiology">
        <title>yveB, encoding endolevanase LevB, is part of the sacB-yveB-yveA levansucrase tricistronic operon in Bacillus subtilis.</title>
        <authorList>
            <person name="Pereira Y."/>
            <person name="Petit-Glatron M.-F."/>
            <person name="Chambert R."/>
        </authorList>
    </citation>
    <scope>INDUCTION</scope>
</reference>
<reference key="4">
    <citation type="journal article" date="2003" name="J. Bacteriol.">
        <title>Identification of the L-aspartate transporter in Bacillus subtilis.</title>
        <authorList>
            <person name="Lorca G."/>
            <person name="Winnen B."/>
            <person name="Saier M.H. Jr."/>
        </authorList>
    </citation>
    <scope>CHARACTERIZATION</scope>
    <source>
        <strain>168</strain>
    </source>
</reference>
<organism>
    <name type="scientific">Bacillus subtilis (strain 168)</name>
    <dbReference type="NCBI Taxonomy" id="224308"/>
    <lineage>
        <taxon>Bacteria</taxon>
        <taxon>Bacillati</taxon>
        <taxon>Bacillota</taxon>
        <taxon>Bacilli</taxon>
        <taxon>Bacillales</taxon>
        <taxon>Bacillaceae</taxon>
        <taxon>Bacillus</taxon>
    </lineage>
</organism>
<protein>
    <recommendedName>
        <fullName>Aspartate-proton symporter</fullName>
    </recommendedName>
    <alternativeName>
        <fullName>L-aspartate transporter</fullName>
    </alternativeName>
</protein>
<evidence type="ECO:0000255" key="1"/>
<evidence type="ECO:0000269" key="2">
    <source>
    </source>
</evidence>
<evidence type="ECO:0000305" key="3"/>
<accession>O07002</accession>
<comment type="function">
    <text>Uptake of L-aspartate with the concomitant import of a proton. Can also transport aspartate hydroxamate and L-glutamate with lower affinity and efficiency.</text>
</comment>
<comment type="subcellular location">
    <subcellularLocation>
        <location>Cell membrane</location>
        <topology>Multi-pass membrane protein</topology>
    </subcellularLocation>
</comment>
<comment type="induction">
    <text evidence="2">Induced by sucrose.</text>
</comment>
<comment type="miscellaneous">
    <text>Allows enhanced growth with L-aspartate as a sole source nitrogen source.</text>
</comment>
<comment type="miscellaneous">
    <text>Inhibited by carbonyl cyanide m-chlorophenylhydrazone and carbonyl cyanide 4-trifluoro-methoxyphenylhydrazone.</text>
</comment>
<comment type="similarity">
    <text evidence="3">Belongs to the amino acid-polyamine-organocation (APC) superfamily. AGT (TC 2.A.3.11) family.</text>
</comment>